<accession>Q9CFX1</accession>
<reference key="1">
    <citation type="journal article" date="2001" name="Genome Res.">
        <title>The complete genome sequence of the lactic acid bacterium Lactococcus lactis ssp. lactis IL1403.</title>
        <authorList>
            <person name="Bolotin A."/>
            <person name="Wincker P."/>
            <person name="Mauger S."/>
            <person name="Jaillon O."/>
            <person name="Malarme K."/>
            <person name="Weissenbach J."/>
            <person name="Ehrlich S.D."/>
            <person name="Sorokin A."/>
        </authorList>
    </citation>
    <scope>NUCLEOTIDE SEQUENCE [LARGE SCALE GENOMIC DNA]</scope>
    <source>
        <strain>IL1403</strain>
    </source>
</reference>
<name>RSMG_LACLA</name>
<comment type="function">
    <text evidence="1">Specifically methylates the N7 position of a guanine in 16S rRNA.</text>
</comment>
<comment type="subcellular location">
    <subcellularLocation>
        <location evidence="1">Cytoplasm</location>
    </subcellularLocation>
</comment>
<comment type="similarity">
    <text evidence="1">Belongs to the methyltransferase superfamily. RNA methyltransferase RsmG family.</text>
</comment>
<dbReference type="EC" id="2.1.1.-" evidence="1"/>
<dbReference type="EMBL" id="AE005176">
    <property type="protein sequence ID" value="AAK05441.1"/>
    <property type="molecule type" value="Genomic_DNA"/>
</dbReference>
<dbReference type="PIR" id="G86792">
    <property type="entry name" value="G86792"/>
</dbReference>
<dbReference type="RefSeq" id="NP_267499.1">
    <property type="nucleotide sequence ID" value="NC_002662.1"/>
</dbReference>
<dbReference type="RefSeq" id="WP_003131091.1">
    <property type="nucleotide sequence ID" value="NC_002662.1"/>
</dbReference>
<dbReference type="SMR" id="Q9CFX1"/>
<dbReference type="PaxDb" id="272623-L180469"/>
<dbReference type="EnsemblBacteria" id="AAK05441">
    <property type="protein sequence ID" value="AAK05441"/>
    <property type="gene ID" value="L180469"/>
</dbReference>
<dbReference type="GeneID" id="89633575"/>
<dbReference type="KEGG" id="lla:L180469"/>
<dbReference type="PATRIC" id="fig|272623.7.peg.1449"/>
<dbReference type="eggNOG" id="COG0357">
    <property type="taxonomic scope" value="Bacteria"/>
</dbReference>
<dbReference type="HOGENOM" id="CLU_065341_0_2_9"/>
<dbReference type="OrthoDB" id="9808773at2"/>
<dbReference type="Proteomes" id="UP000002196">
    <property type="component" value="Chromosome"/>
</dbReference>
<dbReference type="GO" id="GO:0005829">
    <property type="term" value="C:cytosol"/>
    <property type="evidence" value="ECO:0007669"/>
    <property type="project" value="TreeGrafter"/>
</dbReference>
<dbReference type="GO" id="GO:0070043">
    <property type="term" value="F:rRNA (guanine-N7-)-methyltransferase activity"/>
    <property type="evidence" value="ECO:0007669"/>
    <property type="project" value="UniProtKB-UniRule"/>
</dbReference>
<dbReference type="CDD" id="cd02440">
    <property type="entry name" value="AdoMet_MTases"/>
    <property type="match status" value="1"/>
</dbReference>
<dbReference type="FunFam" id="3.40.50.150:FF:000041">
    <property type="entry name" value="Ribosomal RNA small subunit methyltransferase G"/>
    <property type="match status" value="1"/>
</dbReference>
<dbReference type="Gene3D" id="3.40.50.150">
    <property type="entry name" value="Vaccinia Virus protein VP39"/>
    <property type="match status" value="1"/>
</dbReference>
<dbReference type="HAMAP" id="MF_00074">
    <property type="entry name" value="16SrRNA_methyltr_G"/>
    <property type="match status" value="1"/>
</dbReference>
<dbReference type="InterPro" id="IPR003682">
    <property type="entry name" value="rRNA_ssu_MeTfrase_G"/>
</dbReference>
<dbReference type="InterPro" id="IPR029063">
    <property type="entry name" value="SAM-dependent_MTases_sf"/>
</dbReference>
<dbReference type="NCBIfam" id="TIGR00138">
    <property type="entry name" value="rsmG_gidB"/>
    <property type="match status" value="1"/>
</dbReference>
<dbReference type="PANTHER" id="PTHR31760">
    <property type="entry name" value="S-ADENOSYL-L-METHIONINE-DEPENDENT METHYLTRANSFERASES SUPERFAMILY PROTEIN"/>
    <property type="match status" value="1"/>
</dbReference>
<dbReference type="PANTHER" id="PTHR31760:SF0">
    <property type="entry name" value="S-ADENOSYL-L-METHIONINE-DEPENDENT METHYLTRANSFERASES SUPERFAMILY PROTEIN"/>
    <property type="match status" value="1"/>
</dbReference>
<dbReference type="Pfam" id="PF02527">
    <property type="entry name" value="GidB"/>
    <property type="match status" value="1"/>
</dbReference>
<dbReference type="PIRSF" id="PIRSF003078">
    <property type="entry name" value="GidB"/>
    <property type="match status" value="1"/>
</dbReference>
<dbReference type="SUPFAM" id="SSF53335">
    <property type="entry name" value="S-adenosyl-L-methionine-dependent methyltransferases"/>
    <property type="match status" value="1"/>
</dbReference>
<gene>
    <name evidence="1" type="primary">rsmG</name>
    <name type="ordered locus">LL1343</name>
    <name type="ORF">L180469</name>
</gene>
<proteinExistence type="inferred from homology"/>
<feature type="chain" id="PRO_0000184269" description="Ribosomal RNA small subunit methyltransferase G">
    <location>
        <begin position="1"/>
        <end position="238"/>
    </location>
</feature>
<feature type="region of interest" description="Disordered" evidence="2">
    <location>
        <begin position="216"/>
        <end position="238"/>
    </location>
</feature>
<feature type="binding site" evidence="1">
    <location>
        <position position="78"/>
    </location>
    <ligand>
        <name>S-adenosyl-L-methionine</name>
        <dbReference type="ChEBI" id="CHEBI:59789"/>
    </ligand>
</feature>
<feature type="binding site" evidence="1">
    <location>
        <position position="83"/>
    </location>
    <ligand>
        <name>S-adenosyl-L-methionine</name>
        <dbReference type="ChEBI" id="CHEBI:59789"/>
    </ligand>
</feature>
<feature type="binding site" evidence="1">
    <location>
        <begin position="129"/>
        <end position="130"/>
    </location>
    <ligand>
        <name>S-adenosyl-L-methionine</name>
        <dbReference type="ChEBI" id="CHEBI:59789"/>
    </ligand>
</feature>
<feature type="binding site" evidence="1">
    <location>
        <position position="148"/>
    </location>
    <ligand>
        <name>S-adenosyl-L-methionine</name>
        <dbReference type="ChEBI" id="CHEBI:59789"/>
    </ligand>
</feature>
<organism>
    <name type="scientific">Lactococcus lactis subsp. lactis (strain IL1403)</name>
    <name type="common">Streptococcus lactis</name>
    <dbReference type="NCBI Taxonomy" id="272623"/>
    <lineage>
        <taxon>Bacteria</taxon>
        <taxon>Bacillati</taxon>
        <taxon>Bacillota</taxon>
        <taxon>Bacilli</taxon>
        <taxon>Lactobacillales</taxon>
        <taxon>Streptococcaceae</taxon>
        <taxon>Lactococcus</taxon>
    </lineage>
</organism>
<sequence length="238" mass="26892">MTPDEFLSALTEFDIQLSDKQIKQFERYFELLVEWNEKINLTAITEKNEVYLKHFYDSIAPILYGLITDQPVSILDIGAGAGFPSLPMKIIFPELKVTIIDSLNKRINFLSLLTEELGLENVTLLHGRAEDFGQDANYRGTFDFVTARAVARLSVLTEFTIPFLKKNGILLSLKAAQFEEELNDAKKAIATLGGKFIKEVAYELPNGDERHIALIEKKKETPKKYPRKAGTPAKNPIK</sequence>
<keyword id="KW-0963">Cytoplasm</keyword>
<keyword id="KW-0489">Methyltransferase</keyword>
<keyword id="KW-1185">Reference proteome</keyword>
<keyword id="KW-0698">rRNA processing</keyword>
<keyword id="KW-0949">S-adenosyl-L-methionine</keyword>
<keyword id="KW-0808">Transferase</keyword>
<protein>
    <recommendedName>
        <fullName evidence="1">Ribosomal RNA small subunit methyltransferase G</fullName>
        <ecNumber evidence="1">2.1.1.-</ecNumber>
    </recommendedName>
    <alternativeName>
        <fullName evidence="1">16S rRNA 7-methylguanosine methyltransferase</fullName>
        <shortName evidence="1">16S rRNA m7G methyltransferase</shortName>
    </alternativeName>
</protein>
<evidence type="ECO:0000255" key="1">
    <source>
        <dbReference type="HAMAP-Rule" id="MF_00074"/>
    </source>
</evidence>
<evidence type="ECO:0000256" key="2">
    <source>
        <dbReference type="SAM" id="MobiDB-lite"/>
    </source>
</evidence>